<reference key="1">
    <citation type="journal article" date="1999" name="Proc. Natl. Acad. Sci. U.S.A.">
        <title>The complete chloroplast DNA sequence of the green alga Nephroselmis olivacea: insights into the architecture of ancestral chloroplast genomes.</title>
        <authorList>
            <person name="Turmel M."/>
            <person name="Otis C."/>
            <person name="Lemieux C."/>
        </authorList>
    </citation>
    <scope>NUCLEOTIDE SEQUENCE [LARGE SCALE GENOMIC DNA]</scope>
    <source>
        <strain>NIES-484 / S-N-5-8</strain>
    </source>
</reference>
<geneLocation type="chloroplast"/>
<feature type="chain" id="PRO_0000200320" description="Cytochrome b559 subunit alpha">
    <location>
        <begin position="1"/>
        <end position="83"/>
    </location>
</feature>
<feature type="transmembrane region" description="Helical" evidence="1">
    <location>
        <begin position="21"/>
        <end position="35"/>
    </location>
</feature>
<feature type="binding site" description="axial binding residue" evidence="1">
    <location>
        <position position="23"/>
    </location>
    <ligand>
        <name>heme</name>
        <dbReference type="ChEBI" id="CHEBI:30413"/>
        <note>ligand shared with beta subunit</note>
    </ligand>
    <ligandPart>
        <name>Fe</name>
        <dbReference type="ChEBI" id="CHEBI:18248"/>
    </ligandPart>
</feature>
<dbReference type="EMBL" id="AF137379">
    <property type="protein sequence ID" value="AAD54835.1"/>
    <property type="molecule type" value="Genomic_DNA"/>
</dbReference>
<dbReference type="RefSeq" id="NP_050864.1">
    <property type="nucleotide sequence ID" value="NC_000927.1"/>
</dbReference>
<dbReference type="SMR" id="Q9TKY1"/>
<dbReference type="GeneID" id="802053"/>
<dbReference type="GO" id="GO:0009535">
    <property type="term" value="C:chloroplast thylakoid membrane"/>
    <property type="evidence" value="ECO:0007669"/>
    <property type="project" value="UniProtKB-SubCell"/>
</dbReference>
<dbReference type="GO" id="GO:0009539">
    <property type="term" value="C:photosystem II reaction center"/>
    <property type="evidence" value="ECO:0007669"/>
    <property type="project" value="InterPro"/>
</dbReference>
<dbReference type="GO" id="GO:0009055">
    <property type="term" value="F:electron transfer activity"/>
    <property type="evidence" value="ECO:0007669"/>
    <property type="project" value="UniProtKB-UniRule"/>
</dbReference>
<dbReference type="GO" id="GO:0020037">
    <property type="term" value="F:heme binding"/>
    <property type="evidence" value="ECO:0007669"/>
    <property type="project" value="InterPro"/>
</dbReference>
<dbReference type="GO" id="GO:0005506">
    <property type="term" value="F:iron ion binding"/>
    <property type="evidence" value="ECO:0007669"/>
    <property type="project" value="UniProtKB-UniRule"/>
</dbReference>
<dbReference type="GO" id="GO:0009767">
    <property type="term" value="P:photosynthetic electron transport chain"/>
    <property type="evidence" value="ECO:0007669"/>
    <property type="project" value="InterPro"/>
</dbReference>
<dbReference type="Gene3D" id="1.20.5.860">
    <property type="entry name" value="Photosystem II cytochrome b559, alpha subunit"/>
    <property type="match status" value="1"/>
</dbReference>
<dbReference type="HAMAP" id="MF_00642">
    <property type="entry name" value="PSII_PsbE"/>
    <property type="match status" value="1"/>
</dbReference>
<dbReference type="InterPro" id="IPR006217">
    <property type="entry name" value="PSII_cyt_b559_asu"/>
</dbReference>
<dbReference type="InterPro" id="IPR037025">
    <property type="entry name" value="PSII_cyt_b559_asu_sf"/>
</dbReference>
<dbReference type="InterPro" id="IPR006216">
    <property type="entry name" value="PSII_cyt_b559_CS"/>
</dbReference>
<dbReference type="InterPro" id="IPR013081">
    <property type="entry name" value="PSII_cyt_b559_N"/>
</dbReference>
<dbReference type="InterPro" id="IPR013082">
    <property type="entry name" value="PSII_cytb559_asu_lum"/>
</dbReference>
<dbReference type="NCBIfam" id="TIGR01332">
    <property type="entry name" value="cyt_b559_alpha"/>
    <property type="match status" value="1"/>
</dbReference>
<dbReference type="PANTHER" id="PTHR33391">
    <property type="entry name" value="CYTOCHROME B559 SUBUNIT BETA-RELATED"/>
    <property type="match status" value="1"/>
</dbReference>
<dbReference type="PANTHER" id="PTHR33391:SF9">
    <property type="entry name" value="CYTOCHROME B559 SUBUNIT BETA-RELATED"/>
    <property type="match status" value="1"/>
</dbReference>
<dbReference type="Pfam" id="PF00283">
    <property type="entry name" value="Cytochrom_B559"/>
    <property type="match status" value="1"/>
</dbReference>
<dbReference type="Pfam" id="PF00284">
    <property type="entry name" value="Cytochrom_B559a"/>
    <property type="match status" value="1"/>
</dbReference>
<dbReference type="PIRSF" id="PIRSF000036">
    <property type="entry name" value="PsbE"/>
    <property type="match status" value="1"/>
</dbReference>
<dbReference type="SUPFAM" id="SSF161045">
    <property type="entry name" value="Cytochrome b559 subunits"/>
    <property type="match status" value="1"/>
</dbReference>
<dbReference type="PROSITE" id="PS00537">
    <property type="entry name" value="CYTOCHROME_B559"/>
    <property type="match status" value="1"/>
</dbReference>
<comment type="function">
    <text evidence="1">This b-type cytochrome is tightly associated with the reaction center of photosystem II (PSII). PSII is a light-driven water:plastoquinone oxidoreductase that uses light energy to abstract electrons from H(2)O, generating O(2) and a proton gradient subsequently used for ATP formation. It consists of a core antenna complex that captures photons, and an electron transfer chain that converts photonic excitation into a charge separation.</text>
</comment>
<comment type="cofactor">
    <cofactor evidence="1">
        <name>heme b</name>
        <dbReference type="ChEBI" id="CHEBI:60344"/>
    </cofactor>
    <text evidence="1">With its partner (PsbF) binds heme. PSII binds additional chlorophylls, carotenoids and specific lipids.</text>
</comment>
<comment type="subunit">
    <text evidence="1">Heterodimer of an alpha subunit and a beta subunit. PSII is composed of 1 copy each of membrane proteins PsbA, PsbB, PsbC, PsbD, PsbE, PsbF, PsbH, PsbI, PsbJ, PsbK, PsbL, PsbM, PsbT, PsbX, PsbY, PsbZ, Psb30/Ycf12, at least 3 peripheral proteins of the oxygen-evolving complex and a large number of cofactors. It forms dimeric complexes.</text>
</comment>
<comment type="subcellular location">
    <subcellularLocation>
        <location evidence="1">Plastid</location>
        <location evidence="1">Chloroplast thylakoid membrane</location>
        <topology evidence="1">Single-pass membrane protein</topology>
    </subcellularLocation>
</comment>
<comment type="similarity">
    <text evidence="1">Belongs to the PsbE/PsbF family.</text>
</comment>
<evidence type="ECO:0000255" key="1">
    <source>
        <dbReference type="HAMAP-Rule" id="MF_00642"/>
    </source>
</evidence>
<name>PSBE_NEPOL</name>
<keyword id="KW-0150">Chloroplast</keyword>
<keyword id="KW-0249">Electron transport</keyword>
<keyword id="KW-0349">Heme</keyword>
<keyword id="KW-0408">Iron</keyword>
<keyword id="KW-0472">Membrane</keyword>
<keyword id="KW-0479">Metal-binding</keyword>
<keyword id="KW-0602">Photosynthesis</keyword>
<keyword id="KW-0604">Photosystem II</keyword>
<keyword id="KW-0934">Plastid</keyword>
<keyword id="KW-0793">Thylakoid</keyword>
<keyword id="KW-0812">Transmembrane</keyword>
<keyword id="KW-1133">Transmembrane helix</keyword>
<keyword id="KW-0813">Transport</keyword>
<proteinExistence type="inferred from homology"/>
<accession>Q9TKY1</accession>
<protein>
    <recommendedName>
        <fullName evidence="1">Cytochrome b559 subunit alpha</fullName>
    </recommendedName>
    <alternativeName>
        <fullName evidence="1">PSII reaction center subunit V</fullName>
    </alternativeName>
</protein>
<gene>
    <name evidence="1" type="primary">psbE</name>
</gene>
<sequence length="83" mass="9404">MSGSTGERPFSDILTSIRYWVIHSITIPSLFVAGWLFVSTGLAYDVFGSPRPNEYFTEERQTTPLITDRFNALQQMDILTEGL</sequence>
<organism>
    <name type="scientific">Nephroselmis olivacea</name>
    <name type="common">Green alga</name>
    <dbReference type="NCBI Taxonomy" id="31312"/>
    <lineage>
        <taxon>Eukaryota</taxon>
        <taxon>Viridiplantae</taxon>
        <taxon>Chlorophyta</taxon>
        <taxon>Nephroselmidophyceae</taxon>
        <taxon>Nephroselmidales</taxon>
        <taxon>Nephroselmidaceae</taxon>
        <taxon>Nephroselmis</taxon>
    </lineage>
</organism>